<accession>Q74K66</accession>
<protein>
    <recommendedName>
        <fullName evidence="1">UDP-N-acetylenolpyruvoylglucosamine reductase</fullName>
        <ecNumber evidence="1">1.3.1.98</ecNumber>
    </recommendedName>
    <alternativeName>
        <fullName evidence="1">UDP-N-acetylmuramate dehydrogenase</fullName>
    </alternativeName>
</protein>
<feature type="chain" id="PRO_0000224689" description="UDP-N-acetylenolpyruvoylglucosamine reductase">
    <location>
        <begin position="1"/>
        <end position="301"/>
    </location>
</feature>
<feature type="domain" description="FAD-binding PCMH-type" evidence="1">
    <location>
        <begin position="26"/>
        <end position="193"/>
    </location>
</feature>
<feature type="active site" evidence="1">
    <location>
        <position position="172"/>
    </location>
</feature>
<feature type="active site" description="Proton donor" evidence="1">
    <location>
        <position position="222"/>
    </location>
</feature>
<feature type="active site" evidence="1">
    <location>
        <position position="292"/>
    </location>
</feature>
<proteinExistence type="inferred from homology"/>
<name>MURB_LACJO</name>
<evidence type="ECO:0000255" key="1">
    <source>
        <dbReference type="HAMAP-Rule" id="MF_00037"/>
    </source>
</evidence>
<sequence>MQLMDLRKQGIDIQENIPLSRFTFTKTGGPAQYLAFPKNLNELELLVDTVKENNIPLTVIGNASNLIIRDGGISGLVLILTKMDTIVANKDEATVTADAGARIIDTSEAACEAGLSGLEFAAGIPGSVGGAVFMNAGAYGGETEFVIKSVRVLTRAGEFKTYTHDEMEFGYRHSLVQETGDIVVSATFGLEPGDKWAIKAKMEYFNGLRRAKQPLEYPSCGSVFKRPAGHFVGPMIIKAGLQGKRIGGAEDSMKHAGFIVNVGGATATDYLDLIHLIQKTIKKDFGIDLQTEVRIIGKEKD</sequence>
<organism>
    <name type="scientific">Lactobacillus johnsonii (strain CNCM I-12250 / La1 / NCC 533)</name>
    <dbReference type="NCBI Taxonomy" id="257314"/>
    <lineage>
        <taxon>Bacteria</taxon>
        <taxon>Bacillati</taxon>
        <taxon>Bacillota</taxon>
        <taxon>Bacilli</taxon>
        <taxon>Lactobacillales</taxon>
        <taxon>Lactobacillaceae</taxon>
        <taxon>Lactobacillus</taxon>
    </lineage>
</organism>
<gene>
    <name evidence="1" type="primary">murB</name>
    <name type="ordered locus">LJ_0887</name>
</gene>
<keyword id="KW-0131">Cell cycle</keyword>
<keyword id="KW-0132">Cell division</keyword>
<keyword id="KW-0133">Cell shape</keyword>
<keyword id="KW-0961">Cell wall biogenesis/degradation</keyword>
<keyword id="KW-0963">Cytoplasm</keyword>
<keyword id="KW-0274">FAD</keyword>
<keyword id="KW-0285">Flavoprotein</keyword>
<keyword id="KW-0521">NADP</keyword>
<keyword id="KW-0560">Oxidoreductase</keyword>
<keyword id="KW-0573">Peptidoglycan synthesis</keyword>
<dbReference type="EC" id="1.3.1.98" evidence="1"/>
<dbReference type="EMBL" id="AE017198">
    <property type="protein sequence ID" value="AAS08708.1"/>
    <property type="molecule type" value="Genomic_DNA"/>
</dbReference>
<dbReference type="RefSeq" id="WP_011161792.1">
    <property type="nucleotide sequence ID" value="NC_005362.1"/>
</dbReference>
<dbReference type="SMR" id="Q74K66"/>
<dbReference type="KEGG" id="ljo:LJ_0887"/>
<dbReference type="PATRIC" id="fig|257314.6.peg.744"/>
<dbReference type="eggNOG" id="COG0812">
    <property type="taxonomic scope" value="Bacteria"/>
</dbReference>
<dbReference type="HOGENOM" id="CLU_035304_1_1_9"/>
<dbReference type="UniPathway" id="UPA00219"/>
<dbReference type="Proteomes" id="UP000000581">
    <property type="component" value="Chromosome"/>
</dbReference>
<dbReference type="GO" id="GO:0005829">
    <property type="term" value="C:cytosol"/>
    <property type="evidence" value="ECO:0007669"/>
    <property type="project" value="TreeGrafter"/>
</dbReference>
<dbReference type="GO" id="GO:0071949">
    <property type="term" value="F:FAD binding"/>
    <property type="evidence" value="ECO:0007669"/>
    <property type="project" value="InterPro"/>
</dbReference>
<dbReference type="GO" id="GO:0008762">
    <property type="term" value="F:UDP-N-acetylmuramate dehydrogenase activity"/>
    <property type="evidence" value="ECO:0007669"/>
    <property type="project" value="UniProtKB-UniRule"/>
</dbReference>
<dbReference type="GO" id="GO:0051301">
    <property type="term" value="P:cell division"/>
    <property type="evidence" value="ECO:0007669"/>
    <property type="project" value="UniProtKB-KW"/>
</dbReference>
<dbReference type="GO" id="GO:0071555">
    <property type="term" value="P:cell wall organization"/>
    <property type="evidence" value="ECO:0007669"/>
    <property type="project" value="UniProtKB-KW"/>
</dbReference>
<dbReference type="GO" id="GO:0009252">
    <property type="term" value="P:peptidoglycan biosynthetic process"/>
    <property type="evidence" value="ECO:0007669"/>
    <property type="project" value="UniProtKB-UniRule"/>
</dbReference>
<dbReference type="GO" id="GO:0008360">
    <property type="term" value="P:regulation of cell shape"/>
    <property type="evidence" value="ECO:0007669"/>
    <property type="project" value="UniProtKB-KW"/>
</dbReference>
<dbReference type="Gene3D" id="3.30.465.10">
    <property type="match status" value="1"/>
</dbReference>
<dbReference type="Gene3D" id="3.90.78.10">
    <property type="entry name" value="UDP-N-acetylenolpyruvoylglucosamine reductase, C-terminal domain"/>
    <property type="match status" value="1"/>
</dbReference>
<dbReference type="Gene3D" id="3.30.43.10">
    <property type="entry name" value="Uridine Diphospho-n-acetylenolpyruvylglucosamine Reductase, domain 2"/>
    <property type="match status" value="1"/>
</dbReference>
<dbReference type="HAMAP" id="MF_00037">
    <property type="entry name" value="MurB"/>
    <property type="match status" value="1"/>
</dbReference>
<dbReference type="InterPro" id="IPR016166">
    <property type="entry name" value="FAD-bd_PCMH"/>
</dbReference>
<dbReference type="InterPro" id="IPR036318">
    <property type="entry name" value="FAD-bd_PCMH-like_sf"/>
</dbReference>
<dbReference type="InterPro" id="IPR016167">
    <property type="entry name" value="FAD-bd_PCMH_sub1"/>
</dbReference>
<dbReference type="InterPro" id="IPR016169">
    <property type="entry name" value="FAD-bd_PCMH_sub2"/>
</dbReference>
<dbReference type="InterPro" id="IPR003170">
    <property type="entry name" value="MurB"/>
</dbReference>
<dbReference type="InterPro" id="IPR011601">
    <property type="entry name" value="MurB_C"/>
</dbReference>
<dbReference type="InterPro" id="IPR036635">
    <property type="entry name" value="MurB_C_sf"/>
</dbReference>
<dbReference type="InterPro" id="IPR006094">
    <property type="entry name" value="Oxid_FAD_bind_N"/>
</dbReference>
<dbReference type="NCBIfam" id="TIGR00179">
    <property type="entry name" value="murB"/>
    <property type="match status" value="1"/>
</dbReference>
<dbReference type="NCBIfam" id="NF010480">
    <property type="entry name" value="PRK13905.1"/>
    <property type="match status" value="1"/>
</dbReference>
<dbReference type="PANTHER" id="PTHR21071">
    <property type="entry name" value="UDP-N-ACETYLENOLPYRUVOYLGLUCOSAMINE REDUCTASE"/>
    <property type="match status" value="1"/>
</dbReference>
<dbReference type="PANTHER" id="PTHR21071:SF4">
    <property type="entry name" value="UDP-N-ACETYLENOLPYRUVOYLGLUCOSAMINE REDUCTASE"/>
    <property type="match status" value="1"/>
</dbReference>
<dbReference type="Pfam" id="PF01565">
    <property type="entry name" value="FAD_binding_4"/>
    <property type="match status" value="1"/>
</dbReference>
<dbReference type="Pfam" id="PF02873">
    <property type="entry name" value="MurB_C"/>
    <property type="match status" value="1"/>
</dbReference>
<dbReference type="SUPFAM" id="SSF56176">
    <property type="entry name" value="FAD-binding/transporter-associated domain-like"/>
    <property type="match status" value="1"/>
</dbReference>
<dbReference type="SUPFAM" id="SSF56194">
    <property type="entry name" value="Uridine diphospho-N-Acetylenolpyruvylglucosamine reductase, MurB, C-terminal domain"/>
    <property type="match status" value="1"/>
</dbReference>
<dbReference type="PROSITE" id="PS51387">
    <property type="entry name" value="FAD_PCMH"/>
    <property type="match status" value="1"/>
</dbReference>
<reference key="1">
    <citation type="journal article" date="2004" name="Proc. Natl. Acad. Sci. U.S.A.">
        <title>The genome sequence of the probiotic intestinal bacterium Lactobacillus johnsonii NCC 533.</title>
        <authorList>
            <person name="Pridmore R.D."/>
            <person name="Berger B."/>
            <person name="Desiere F."/>
            <person name="Vilanova D."/>
            <person name="Barretto C."/>
            <person name="Pittet A.-C."/>
            <person name="Zwahlen M.-C."/>
            <person name="Rouvet M."/>
            <person name="Altermann E."/>
            <person name="Barrangou R."/>
            <person name="Mollet B."/>
            <person name="Mercenier A."/>
            <person name="Klaenhammer T."/>
            <person name="Arigoni F."/>
            <person name="Schell M.A."/>
        </authorList>
    </citation>
    <scope>NUCLEOTIDE SEQUENCE [LARGE SCALE GENOMIC DNA]</scope>
    <source>
        <strain>CNCM I-1225 / La1 / NCC 533</strain>
    </source>
</reference>
<comment type="function">
    <text evidence="1">Cell wall formation.</text>
</comment>
<comment type="catalytic activity">
    <reaction evidence="1">
        <text>UDP-N-acetyl-alpha-D-muramate + NADP(+) = UDP-N-acetyl-3-O-(1-carboxyvinyl)-alpha-D-glucosamine + NADPH + H(+)</text>
        <dbReference type="Rhea" id="RHEA:12248"/>
        <dbReference type="ChEBI" id="CHEBI:15378"/>
        <dbReference type="ChEBI" id="CHEBI:57783"/>
        <dbReference type="ChEBI" id="CHEBI:58349"/>
        <dbReference type="ChEBI" id="CHEBI:68483"/>
        <dbReference type="ChEBI" id="CHEBI:70757"/>
        <dbReference type="EC" id="1.3.1.98"/>
    </reaction>
</comment>
<comment type="cofactor">
    <cofactor evidence="1">
        <name>FAD</name>
        <dbReference type="ChEBI" id="CHEBI:57692"/>
    </cofactor>
</comment>
<comment type="pathway">
    <text evidence="1">Cell wall biogenesis; peptidoglycan biosynthesis.</text>
</comment>
<comment type="subcellular location">
    <subcellularLocation>
        <location evidence="1">Cytoplasm</location>
    </subcellularLocation>
</comment>
<comment type="similarity">
    <text evidence="1">Belongs to the MurB family.</text>
</comment>